<dbReference type="EC" id="2.7.1.234" evidence="2"/>
<dbReference type="EMBL" id="AF416702">
    <property type="protein sequence ID" value="AAL60166.1"/>
    <property type="molecule type" value="Genomic_DNA"/>
</dbReference>
<dbReference type="SMR" id="Q8VS15"/>
<dbReference type="BRENDA" id="2.7.1.B27">
    <property type="organism ID" value="2811"/>
</dbReference>
<dbReference type="GO" id="GO:0005829">
    <property type="term" value="C:cytosol"/>
    <property type="evidence" value="ECO:0007669"/>
    <property type="project" value="TreeGrafter"/>
</dbReference>
<dbReference type="GO" id="GO:0008662">
    <property type="term" value="F:1-phosphofructokinase activity"/>
    <property type="evidence" value="ECO:0007669"/>
    <property type="project" value="InterPro"/>
</dbReference>
<dbReference type="GO" id="GO:0005524">
    <property type="term" value="F:ATP binding"/>
    <property type="evidence" value="ECO:0007669"/>
    <property type="project" value="UniProtKB-KW"/>
</dbReference>
<dbReference type="CDD" id="cd01164">
    <property type="entry name" value="FruK_PfkB_like"/>
    <property type="match status" value="1"/>
</dbReference>
<dbReference type="Gene3D" id="3.40.1190.20">
    <property type="match status" value="1"/>
</dbReference>
<dbReference type="InterPro" id="IPR022463">
    <property type="entry name" value="1-PFruKinase"/>
</dbReference>
<dbReference type="InterPro" id="IPR011611">
    <property type="entry name" value="PfkB_dom"/>
</dbReference>
<dbReference type="InterPro" id="IPR029056">
    <property type="entry name" value="Ribokinase-like"/>
</dbReference>
<dbReference type="InterPro" id="IPR017583">
    <property type="entry name" value="Tagatose/fructose_Pkinase"/>
</dbReference>
<dbReference type="NCBIfam" id="TIGR03168">
    <property type="entry name" value="1-PFK"/>
    <property type="match status" value="1"/>
</dbReference>
<dbReference type="NCBIfam" id="TIGR03828">
    <property type="entry name" value="pfkB"/>
    <property type="match status" value="1"/>
</dbReference>
<dbReference type="PANTHER" id="PTHR46566:SF1">
    <property type="entry name" value="1-PHOSPHOFRUCTOKINASE"/>
    <property type="match status" value="1"/>
</dbReference>
<dbReference type="PANTHER" id="PTHR46566">
    <property type="entry name" value="1-PHOSPHOFRUCTOKINASE-RELATED"/>
    <property type="match status" value="1"/>
</dbReference>
<dbReference type="Pfam" id="PF00294">
    <property type="entry name" value="PfkB"/>
    <property type="match status" value="1"/>
</dbReference>
<dbReference type="PIRSF" id="PIRSF000535">
    <property type="entry name" value="1PFK/6PFK/LacC"/>
    <property type="match status" value="1"/>
</dbReference>
<dbReference type="SUPFAM" id="SSF53613">
    <property type="entry name" value="Ribokinase-like"/>
    <property type="match status" value="1"/>
</dbReference>
<sequence>MIHTLTLNTAIDMNMFCDPLKPSAVNRTRHTEYCPNGKGVNVSLILNHYQQPTHIIGIFGGFTGRYIVEELRQKKIKVTPAWVSEPPRINIFINDGAEEYKLVNPGAKIDDECKQQVIHHLQCVASGDYLAISGSLPPGIESRFYAEIIELCQQKRCEVILDISHPVLRQLLELRPLLIKPNDDELAGNLGLDVSNHQQVREAMRTLHQLGARNVLLTMGAELPYFSDGEGVWFCSARKIALVSSACAGDAALGAFLSKWLNKEDVAHALALASATGADVAGSAGLGKLQRTEELLQQIQVVQL</sequence>
<proteinExistence type="inferred from homology"/>
<name>TAGK_KLEOX</name>
<evidence type="ECO:0000250" key="1">
    <source>
        <dbReference type="UniProtKB" id="P0A9J6"/>
    </source>
</evidence>
<evidence type="ECO:0000250" key="2">
    <source>
        <dbReference type="UniProtKB" id="Q65EY9"/>
    </source>
</evidence>
<evidence type="ECO:0000269" key="3">
    <source>
    </source>
</evidence>
<evidence type="ECO:0000303" key="4">
    <source>
    </source>
</evidence>
<evidence type="ECO:0000305" key="5"/>
<gene>
    <name evidence="4" type="primary">tagK</name>
</gene>
<protein>
    <recommendedName>
        <fullName evidence="4">D-tagatose-1-phosphate kinase</fullName>
        <shortName evidence="4">Tag1P kinase</shortName>
        <ecNumber evidence="2">2.7.1.234</ecNumber>
    </recommendedName>
</protein>
<feature type="chain" id="PRO_0000461339" description="D-tagatose-1-phosphate kinase">
    <location>
        <begin position="1"/>
        <end position="304"/>
    </location>
</feature>
<feature type="active site" description="Proton acceptor" evidence="1">
    <location>
        <position position="250"/>
    </location>
</feature>
<organism>
    <name type="scientific">Klebsiella oxytoca</name>
    <dbReference type="NCBI Taxonomy" id="571"/>
    <lineage>
        <taxon>Bacteria</taxon>
        <taxon>Pseudomonadati</taxon>
        <taxon>Pseudomonadota</taxon>
        <taxon>Gammaproteobacteria</taxon>
        <taxon>Enterobacterales</taxon>
        <taxon>Enterobacteriaceae</taxon>
        <taxon>Klebsiella/Raoultella group</taxon>
        <taxon>Klebsiella</taxon>
    </lineage>
</organism>
<comment type="function">
    <text evidence="2 3">Kinase involved in a D-tagatose catabolic pathway (PubMed:15257457). Catalyzes the phosphorylation of D-tagatose-1-phosphate (Tag-1P) to D-tagatose-1,6-bisphosphate (By similarity).</text>
</comment>
<comment type="catalytic activity">
    <reaction evidence="2">
        <text>alpha-D-tagatopyranose 1-phosphate + ATP = D-tagatofuranose 1,6-bisphosphate + ADP + H(+)</text>
        <dbReference type="Rhea" id="RHEA:69536"/>
        <dbReference type="ChEBI" id="CHEBI:15378"/>
        <dbReference type="ChEBI" id="CHEBI:30616"/>
        <dbReference type="ChEBI" id="CHEBI:58694"/>
        <dbReference type="ChEBI" id="CHEBI:184379"/>
        <dbReference type="ChEBI" id="CHEBI:456216"/>
        <dbReference type="EC" id="2.7.1.234"/>
    </reaction>
    <physiologicalReaction direction="left-to-right" evidence="2">
        <dbReference type="Rhea" id="RHEA:69537"/>
    </physiologicalReaction>
</comment>
<comment type="cofactor">
    <cofactor evidence="2">
        <name>Mg(2+)</name>
        <dbReference type="ChEBI" id="CHEBI:18420"/>
    </cofactor>
</comment>
<comment type="pathway">
    <text evidence="3">Carbohydrate degradation.</text>
</comment>
<comment type="similarity">
    <text evidence="5">Belongs to the carbohydrate kinase PfkB family.</text>
</comment>
<reference key="1">
    <citation type="journal article" date="2004" name="Mol. Genet. Genomics">
        <title>The genes and enzymes for the catabolism of galactitol, D-tagatose, and related carbohydrates in Klebsiella oxytoca M5a1 and other enteric bacteria display convergent evolution.</title>
        <authorList>
            <person name="Shakeri-Garakani A."/>
            <person name="Brinkkoetter A."/>
            <person name="Schmid K."/>
            <person name="Turgut S."/>
            <person name="Lengeler J.W."/>
        </authorList>
    </citation>
    <scope>NUCLEOTIDE SEQUENCE [GENOMIC DNA]</scope>
    <scope>FUNCTION</scope>
    <scope>PATHWAY</scope>
    <source>
        <strain>M5a1</strain>
    </source>
</reference>
<accession>Q8VS15</accession>
<keyword id="KW-0067">ATP-binding</keyword>
<keyword id="KW-0119">Carbohydrate metabolism</keyword>
<keyword id="KW-0418">Kinase</keyword>
<keyword id="KW-0460">Magnesium</keyword>
<keyword id="KW-0547">Nucleotide-binding</keyword>
<keyword id="KW-0808">Transferase</keyword>